<organism>
    <name type="scientific">Escherichia coli (strain 55989 / EAEC)</name>
    <dbReference type="NCBI Taxonomy" id="585055"/>
    <lineage>
        <taxon>Bacteria</taxon>
        <taxon>Pseudomonadati</taxon>
        <taxon>Pseudomonadota</taxon>
        <taxon>Gammaproteobacteria</taxon>
        <taxon>Enterobacterales</taxon>
        <taxon>Enterobacteriaceae</taxon>
        <taxon>Escherichia</taxon>
    </lineage>
</organism>
<proteinExistence type="inferred from homology"/>
<evidence type="ECO:0000255" key="1">
    <source>
        <dbReference type="HAMAP-Rule" id="MF_00049"/>
    </source>
</evidence>
<reference key="1">
    <citation type="journal article" date="2009" name="PLoS Genet.">
        <title>Organised genome dynamics in the Escherichia coli species results in highly diverse adaptive paths.</title>
        <authorList>
            <person name="Touchon M."/>
            <person name="Hoede C."/>
            <person name="Tenaillon O."/>
            <person name="Barbe V."/>
            <person name="Baeriswyl S."/>
            <person name="Bidet P."/>
            <person name="Bingen E."/>
            <person name="Bonacorsi S."/>
            <person name="Bouchier C."/>
            <person name="Bouvet O."/>
            <person name="Calteau A."/>
            <person name="Chiapello H."/>
            <person name="Clermont O."/>
            <person name="Cruveiller S."/>
            <person name="Danchin A."/>
            <person name="Diard M."/>
            <person name="Dossat C."/>
            <person name="Karoui M.E."/>
            <person name="Frapy E."/>
            <person name="Garry L."/>
            <person name="Ghigo J.M."/>
            <person name="Gilles A.M."/>
            <person name="Johnson J."/>
            <person name="Le Bouguenec C."/>
            <person name="Lescat M."/>
            <person name="Mangenot S."/>
            <person name="Martinez-Jehanne V."/>
            <person name="Matic I."/>
            <person name="Nassif X."/>
            <person name="Oztas S."/>
            <person name="Petit M.A."/>
            <person name="Pichon C."/>
            <person name="Rouy Z."/>
            <person name="Ruf C.S."/>
            <person name="Schneider D."/>
            <person name="Tourret J."/>
            <person name="Vacherie B."/>
            <person name="Vallenet D."/>
            <person name="Medigue C."/>
            <person name="Rocha E.P.C."/>
            <person name="Denamur E."/>
        </authorList>
    </citation>
    <scope>NUCLEOTIDE SEQUENCE [LARGE SCALE GENOMIC DNA]</scope>
    <source>
        <strain>55989 / EAEC</strain>
    </source>
</reference>
<gene>
    <name evidence="1" type="primary">leuS</name>
    <name type="ordered locus">EC55989_0634</name>
</gene>
<keyword id="KW-0030">Aminoacyl-tRNA synthetase</keyword>
<keyword id="KW-0067">ATP-binding</keyword>
<keyword id="KW-0963">Cytoplasm</keyword>
<keyword id="KW-0436">Ligase</keyword>
<keyword id="KW-0547">Nucleotide-binding</keyword>
<keyword id="KW-0648">Protein biosynthesis</keyword>
<keyword id="KW-1185">Reference proteome</keyword>
<comment type="catalytic activity">
    <reaction evidence="1">
        <text>tRNA(Leu) + L-leucine + ATP = L-leucyl-tRNA(Leu) + AMP + diphosphate</text>
        <dbReference type="Rhea" id="RHEA:11688"/>
        <dbReference type="Rhea" id="RHEA-COMP:9613"/>
        <dbReference type="Rhea" id="RHEA-COMP:9622"/>
        <dbReference type="ChEBI" id="CHEBI:30616"/>
        <dbReference type="ChEBI" id="CHEBI:33019"/>
        <dbReference type="ChEBI" id="CHEBI:57427"/>
        <dbReference type="ChEBI" id="CHEBI:78442"/>
        <dbReference type="ChEBI" id="CHEBI:78494"/>
        <dbReference type="ChEBI" id="CHEBI:456215"/>
        <dbReference type="EC" id="6.1.1.4"/>
    </reaction>
</comment>
<comment type="subcellular location">
    <subcellularLocation>
        <location evidence="1">Cytoplasm</location>
    </subcellularLocation>
</comment>
<comment type="similarity">
    <text evidence="1">Belongs to the class-I aminoacyl-tRNA synthetase family.</text>
</comment>
<accession>B7L9I6</accession>
<dbReference type="EC" id="6.1.1.4" evidence="1"/>
<dbReference type="EMBL" id="CU928145">
    <property type="protein sequence ID" value="CAU96506.1"/>
    <property type="molecule type" value="Genomic_DNA"/>
</dbReference>
<dbReference type="RefSeq" id="WP_001157890.1">
    <property type="nucleotide sequence ID" value="NC_011748.1"/>
</dbReference>
<dbReference type="SMR" id="B7L9I6"/>
<dbReference type="GeneID" id="75204997"/>
<dbReference type="KEGG" id="eck:EC55989_0634"/>
<dbReference type="HOGENOM" id="CLU_004427_0_0_6"/>
<dbReference type="Proteomes" id="UP000000746">
    <property type="component" value="Chromosome"/>
</dbReference>
<dbReference type="GO" id="GO:0005829">
    <property type="term" value="C:cytosol"/>
    <property type="evidence" value="ECO:0007669"/>
    <property type="project" value="TreeGrafter"/>
</dbReference>
<dbReference type="GO" id="GO:0002161">
    <property type="term" value="F:aminoacyl-tRNA deacylase activity"/>
    <property type="evidence" value="ECO:0007669"/>
    <property type="project" value="InterPro"/>
</dbReference>
<dbReference type="GO" id="GO:0005524">
    <property type="term" value="F:ATP binding"/>
    <property type="evidence" value="ECO:0007669"/>
    <property type="project" value="UniProtKB-UniRule"/>
</dbReference>
<dbReference type="GO" id="GO:0004823">
    <property type="term" value="F:leucine-tRNA ligase activity"/>
    <property type="evidence" value="ECO:0007669"/>
    <property type="project" value="UniProtKB-UniRule"/>
</dbReference>
<dbReference type="GO" id="GO:0006429">
    <property type="term" value="P:leucyl-tRNA aminoacylation"/>
    <property type="evidence" value="ECO:0007669"/>
    <property type="project" value="UniProtKB-UniRule"/>
</dbReference>
<dbReference type="CDD" id="cd07958">
    <property type="entry name" value="Anticodon_Ia_Leu_BEm"/>
    <property type="match status" value="1"/>
</dbReference>
<dbReference type="CDD" id="cd00812">
    <property type="entry name" value="LeuRS_core"/>
    <property type="match status" value="1"/>
</dbReference>
<dbReference type="FunFam" id="1.10.730.10:FF:000002">
    <property type="entry name" value="Leucine--tRNA ligase"/>
    <property type="match status" value="2"/>
</dbReference>
<dbReference type="FunFam" id="2.20.28.290:FF:000001">
    <property type="entry name" value="Leucine--tRNA ligase"/>
    <property type="match status" value="1"/>
</dbReference>
<dbReference type="FunFam" id="3.10.20.590:FF:000001">
    <property type="entry name" value="Leucine--tRNA ligase"/>
    <property type="match status" value="1"/>
</dbReference>
<dbReference type="FunFam" id="3.40.50.620:FF:000003">
    <property type="entry name" value="Leucine--tRNA ligase"/>
    <property type="match status" value="1"/>
</dbReference>
<dbReference type="FunFam" id="3.40.50.620:FF:000124">
    <property type="entry name" value="Leucine--tRNA ligase"/>
    <property type="match status" value="1"/>
</dbReference>
<dbReference type="FunFam" id="3.90.740.10:FF:000012">
    <property type="entry name" value="Leucine--tRNA ligase"/>
    <property type="match status" value="1"/>
</dbReference>
<dbReference type="Gene3D" id="2.20.28.290">
    <property type="match status" value="1"/>
</dbReference>
<dbReference type="Gene3D" id="3.10.20.590">
    <property type="match status" value="1"/>
</dbReference>
<dbReference type="Gene3D" id="3.40.50.620">
    <property type="entry name" value="HUPs"/>
    <property type="match status" value="2"/>
</dbReference>
<dbReference type="Gene3D" id="1.10.730.10">
    <property type="entry name" value="Isoleucyl-tRNA Synthetase, Domain 1"/>
    <property type="match status" value="2"/>
</dbReference>
<dbReference type="HAMAP" id="MF_00049_B">
    <property type="entry name" value="Leu_tRNA_synth_B"/>
    <property type="match status" value="1"/>
</dbReference>
<dbReference type="InterPro" id="IPR001412">
    <property type="entry name" value="aa-tRNA-synth_I_CS"/>
</dbReference>
<dbReference type="InterPro" id="IPR002300">
    <property type="entry name" value="aa-tRNA-synth_Ia"/>
</dbReference>
<dbReference type="InterPro" id="IPR002302">
    <property type="entry name" value="Leu-tRNA-ligase"/>
</dbReference>
<dbReference type="InterPro" id="IPR025709">
    <property type="entry name" value="Leu_tRNA-synth_edit"/>
</dbReference>
<dbReference type="InterPro" id="IPR013155">
    <property type="entry name" value="M/V/L/I-tRNA-synth_anticd-bd"/>
</dbReference>
<dbReference type="InterPro" id="IPR015413">
    <property type="entry name" value="Methionyl/Leucyl_tRNA_Synth"/>
</dbReference>
<dbReference type="InterPro" id="IPR014729">
    <property type="entry name" value="Rossmann-like_a/b/a_fold"/>
</dbReference>
<dbReference type="InterPro" id="IPR009080">
    <property type="entry name" value="tRNAsynth_Ia_anticodon-bd"/>
</dbReference>
<dbReference type="InterPro" id="IPR009008">
    <property type="entry name" value="Val/Leu/Ile-tRNA-synth_edit"/>
</dbReference>
<dbReference type="NCBIfam" id="TIGR00396">
    <property type="entry name" value="leuS_bact"/>
    <property type="match status" value="1"/>
</dbReference>
<dbReference type="PANTHER" id="PTHR43740:SF2">
    <property type="entry name" value="LEUCINE--TRNA LIGASE, MITOCHONDRIAL"/>
    <property type="match status" value="1"/>
</dbReference>
<dbReference type="PANTHER" id="PTHR43740">
    <property type="entry name" value="LEUCYL-TRNA SYNTHETASE"/>
    <property type="match status" value="1"/>
</dbReference>
<dbReference type="Pfam" id="PF08264">
    <property type="entry name" value="Anticodon_1"/>
    <property type="match status" value="1"/>
</dbReference>
<dbReference type="Pfam" id="PF00133">
    <property type="entry name" value="tRNA-synt_1"/>
    <property type="match status" value="2"/>
</dbReference>
<dbReference type="Pfam" id="PF13603">
    <property type="entry name" value="tRNA-synt_1_2"/>
    <property type="match status" value="1"/>
</dbReference>
<dbReference type="Pfam" id="PF09334">
    <property type="entry name" value="tRNA-synt_1g"/>
    <property type="match status" value="1"/>
</dbReference>
<dbReference type="PRINTS" id="PR00985">
    <property type="entry name" value="TRNASYNTHLEU"/>
</dbReference>
<dbReference type="SUPFAM" id="SSF47323">
    <property type="entry name" value="Anticodon-binding domain of a subclass of class I aminoacyl-tRNA synthetases"/>
    <property type="match status" value="1"/>
</dbReference>
<dbReference type="SUPFAM" id="SSF52374">
    <property type="entry name" value="Nucleotidylyl transferase"/>
    <property type="match status" value="1"/>
</dbReference>
<dbReference type="SUPFAM" id="SSF50677">
    <property type="entry name" value="ValRS/IleRS/LeuRS editing domain"/>
    <property type="match status" value="1"/>
</dbReference>
<dbReference type="PROSITE" id="PS00178">
    <property type="entry name" value="AA_TRNA_LIGASE_I"/>
    <property type="match status" value="1"/>
</dbReference>
<feature type="chain" id="PRO_1000199199" description="Leucine--tRNA ligase">
    <location>
        <begin position="1"/>
        <end position="860"/>
    </location>
</feature>
<feature type="short sequence motif" description="'HIGH' region">
    <location>
        <begin position="42"/>
        <end position="52"/>
    </location>
</feature>
<feature type="short sequence motif" description="'KMSKS' region">
    <location>
        <begin position="619"/>
        <end position="623"/>
    </location>
</feature>
<feature type="binding site" evidence="1">
    <location>
        <position position="622"/>
    </location>
    <ligand>
        <name>ATP</name>
        <dbReference type="ChEBI" id="CHEBI:30616"/>
    </ligand>
</feature>
<name>SYL_ECO55</name>
<sequence length="860" mass="97236">MQEQYRPEEIESKVQLHWDEKRTFEVTEDESKEKYYCLSMLPYPSGRLHMGHVRNYTIGDVIARYQRMLGKNVLQPIGWDAFGLPAEGAAVKNNTAPAPWTYDNIAYMKNQLKMLGFGYDWSRELATCTPEYYRWEQKFFTELYKKGLVYKKTSAVNWCPNDQTVLANEQVIDGCCWRCDTKVERKEIPQWFIKITAYADELLNDLDKLDHWPDTVKTMQRNWIGRSEGVEITFNVNDYDNTLTVYTTRPDTFMGCTYLAVAAGHPLAQKAAENNPELAAFIDECRNTKVAEAEMATMEKKGVDTGFKAVHPLTGEEIPVWAANFVLMEYGTGAVMAVPGHDQRDYEFASKYGLNIKPVILAADGSEPDLSQQALTEKGVLFNSGEFNGLDHEAAFNAIADKLTAMGVGERKVNYRLRDWGVSRQRYWGAPIPMVTLEDGTVMPTPDDQLPVILPEDVVMDGITSPIKADPEWAKTTVNGMPALRETDTFDTFMESSWYYARYTCPEYKEGMLDSEAANYWLPVDIYIGGIEHAIMHLLYFRFFHKLMRDAGMVNSDEPAKQLLCQGMVLADAFYYVGENGERNWVSPVDAIVERDEKGRIVKAKDAAGHELVYTGMSKMSKSKNNGIDPQVMVERYGADTVRLFMMFASPADMTLEWQESGVEGANRFLKRVWKLVYEHTAKGDVAALNVDALTEDQKALRRDVHKTIAKVTDDIGRRQTFNTAIAAIMELMNKLAKAPTDGEQDRALMQEALLAVVRMLNPFTPHICFTLWQELKGEGDIDNAPWPVADEKAMVEDSTLVVVQVNGKVRAKITVPVDATEEQVRERAGQEHLVAKYLDGVTVRKVIYVPGKLLNLVVG</sequence>
<protein>
    <recommendedName>
        <fullName evidence="1">Leucine--tRNA ligase</fullName>
        <ecNumber evidence="1">6.1.1.4</ecNumber>
    </recommendedName>
    <alternativeName>
        <fullName evidence="1">Leucyl-tRNA synthetase</fullName>
        <shortName evidence="1">LeuRS</shortName>
    </alternativeName>
</protein>